<organism>
    <name type="scientific">Pediococcus pentosaceus (strain ATCC 25745 / CCUG 21536 / LMG 10740 / 183-1w)</name>
    <dbReference type="NCBI Taxonomy" id="278197"/>
    <lineage>
        <taxon>Bacteria</taxon>
        <taxon>Bacillati</taxon>
        <taxon>Bacillota</taxon>
        <taxon>Bacilli</taxon>
        <taxon>Lactobacillales</taxon>
        <taxon>Lactobacillaceae</taxon>
        <taxon>Pediococcus</taxon>
    </lineage>
</organism>
<proteinExistence type="inferred from homology"/>
<reference key="1">
    <citation type="journal article" date="2006" name="Proc. Natl. Acad. Sci. U.S.A.">
        <title>Comparative genomics of the lactic acid bacteria.</title>
        <authorList>
            <person name="Makarova K.S."/>
            <person name="Slesarev A."/>
            <person name="Wolf Y.I."/>
            <person name="Sorokin A."/>
            <person name="Mirkin B."/>
            <person name="Koonin E.V."/>
            <person name="Pavlov A."/>
            <person name="Pavlova N."/>
            <person name="Karamychev V."/>
            <person name="Polouchine N."/>
            <person name="Shakhova V."/>
            <person name="Grigoriev I."/>
            <person name="Lou Y."/>
            <person name="Rohksar D."/>
            <person name="Lucas S."/>
            <person name="Huang K."/>
            <person name="Goodstein D.M."/>
            <person name="Hawkins T."/>
            <person name="Plengvidhya V."/>
            <person name="Welker D."/>
            <person name="Hughes J."/>
            <person name="Goh Y."/>
            <person name="Benson A."/>
            <person name="Baldwin K."/>
            <person name="Lee J.-H."/>
            <person name="Diaz-Muniz I."/>
            <person name="Dosti B."/>
            <person name="Smeianov V."/>
            <person name="Wechter W."/>
            <person name="Barabote R."/>
            <person name="Lorca G."/>
            <person name="Altermann E."/>
            <person name="Barrangou R."/>
            <person name="Ganesan B."/>
            <person name="Xie Y."/>
            <person name="Rawsthorne H."/>
            <person name="Tamir D."/>
            <person name="Parker C."/>
            <person name="Breidt F."/>
            <person name="Broadbent J.R."/>
            <person name="Hutkins R."/>
            <person name="O'Sullivan D."/>
            <person name="Steele J."/>
            <person name="Unlu G."/>
            <person name="Saier M.H. Jr."/>
            <person name="Klaenhammer T."/>
            <person name="Richardson P."/>
            <person name="Kozyavkin S."/>
            <person name="Weimer B.C."/>
            <person name="Mills D.A."/>
        </authorList>
    </citation>
    <scope>NUCLEOTIDE SEQUENCE [LARGE SCALE GENOMIC DNA]</scope>
    <source>
        <strain>ATCC 25745 / CCUG 21536 / LMG 10740 / 183-1w</strain>
    </source>
</reference>
<name>RS13_PEDPA</name>
<sequence>MARIAGVDLPRDKRIVIGLTYIFGIGNTTAQKILKDAEVSEDIRVRDLTADQEDKIRAEVDNYLVEGDLRRTVSLNIKRLQEIGSYRGMRHRRGLPVRGQHTKNNARTRKGKKVSIAGRKK</sequence>
<gene>
    <name evidence="1" type="primary">rpsM</name>
    <name type="ordered locus">PEPE_1394</name>
</gene>
<keyword id="KW-0687">Ribonucleoprotein</keyword>
<keyword id="KW-0689">Ribosomal protein</keyword>
<keyword id="KW-0694">RNA-binding</keyword>
<keyword id="KW-0699">rRNA-binding</keyword>
<keyword id="KW-0820">tRNA-binding</keyword>
<comment type="function">
    <text evidence="1">Located at the top of the head of the 30S subunit, it contacts several helices of the 16S rRNA. In the 70S ribosome it contacts the 23S rRNA (bridge B1a) and protein L5 of the 50S subunit (bridge B1b), connecting the 2 subunits; these bridges are implicated in subunit movement. Contacts the tRNAs in the A and P-sites.</text>
</comment>
<comment type="subunit">
    <text evidence="1">Part of the 30S ribosomal subunit. Forms a loose heterodimer with protein S19. Forms two bridges to the 50S subunit in the 70S ribosome.</text>
</comment>
<comment type="similarity">
    <text evidence="1">Belongs to the universal ribosomal protein uS13 family.</text>
</comment>
<protein>
    <recommendedName>
        <fullName evidence="1">Small ribosomal subunit protein uS13</fullName>
    </recommendedName>
    <alternativeName>
        <fullName evidence="3">30S ribosomal protein S13</fullName>
    </alternativeName>
</protein>
<evidence type="ECO:0000255" key="1">
    <source>
        <dbReference type="HAMAP-Rule" id="MF_01315"/>
    </source>
</evidence>
<evidence type="ECO:0000256" key="2">
    <source>
        <dbReference type="SAM" id="MobiDB-lite"/>
    </source>
</evidence>
<evidence type="ECO:0000305" key="3"/>
<feature type="chain" id="PRO_0000306670" description="Small ribosomal subunit protein uS13">
    <location>
        <begin position="1"/>
        <end position="121"/>
    </location>
</feature>
<feature type="region of interest" description="Disordered" evidence="2">
    <location>
        <begin position="89"/>
        <end position="121"/>
    </location>
</feature>
<dbReference type="EMBL" id="CP000422">
    <property type="protein sequence ID" value="ABJ68432.1"/>
    <property type="molecule type" value="Genomic_DNA"/>
</dbReference>
<dbReference type="RefSeq" id="WP_002833350.1">
    <property type="nucleotide sequence ID" value="NC_008525.1"/>
</dbReference>
<dbReference type="SMR" id="Q03EE0"/>
<dbReference type="STRING" id="278197.PEPE_1394"/>
<dbReference type="GeneID" id="33061252"/>
<dbReference type="KEGG" id="ppe:PEPE_1394"/>
<dbReference type="eggNOG" id="COG0099">
    <property type="taxonomic scope" value="Bacteria"/>
</dbReference>
<dbReference type="HOGENOM" id="CLU_103849_1_1_9"/>
<dbReference type="OrthoDB" id="9803610at2"/>
<dbReference type="Proteomes" id="UP000000773">
    <property type="component" value="Chromosome"/>
</dbReference>
<dbReference type="GO" id="GO:0005829">
    <property type="term" value="C:cytosol"/>
    <property type="evidence" value="ECO:0007669"/>
    <property type="project" value="TreeGrafter"/>
</dbReference>
<dbReference type="GO" id="GO:0015935">
    <property type="term" value="C:small ribosomal subunit"/>
    <property type="evidence" value="ECO:0007669"/>
    <property type="project" value="TreeGrafter"/>
</dbReference>
<dbReference type="GO" id="GO:0019843">
    <property type="term" value="F:rRNA binding"/>
    <property type="evidence" value="ECO:0007669"/>
    <property type="project" value="UniProtKB-UniRule"/>
</dbReference>
<dbReference type="GO" id="GO:0003735">
    <property type="term" value="F:structural constituent of ribosome"/>
    <property type="evidence" value="ECO:0007669"/>
    <property type="project" value="InterPro"/>
</dbReference>
<dbReference type="GO" id="GO:0000049">
    <property type="term" value="F:tRNA binding"/>
    <property type="evidence" value="ECO:0007669"/>
    <property type="project" value="UniProtKB-UniRule"/>
</dbReference>
<dbReference type="GO" id="GO:0006412">
    <property type="term" value="P:translation"/>
    <property type="evidence" value="ECO:0007669"/>
    <property type="project" value="UniProtKB-UniRule"/>
</dbReference>
<dbReference type="FunFam" id="1.10.8.50:FF:000001">
    <property type="entry name" value="30S ribosomal protein S13"/>
    <property type="match status" value="1"/>
</dbReference>
<dbReference type="FunFam" id="4.10.910.10:FF:000001">
    <property type="entry name" value="30S ribosomal protein S13"/>
    <property type="match status" value="1"/>
</dbReference>
<dbReference type="Gene3D" id="1.10.8.50">
    <property type="match status" value="1"/>
</dbReference>
<dbReference type="Gene3D" id="4.10.910.10">
    <property type="entry name" value="30s ribosomal protein s13, domain 2"/>
    <property type="match status" value="1"/>
</dbReference>
<dbReference type="HAMAP" id="MF_01315">
    <property type="entry name" value="Ribosomal_uS13"/>
    <property type="match status" value="1"/>
</dbReference>
<dbReference type="InterPro" id="IPR027437">
    <property type="entry name" value="Rbsml_uS13_C"/>
</dbReference>
<dbReference type="InterPro" id="IPR001892">
    <property type="entry name" value="Ribosomal_uS13"/>
</dbReference>
<dbReference type="InterPro" id="IPR010979">
    <property type="entry name" value="Ribosomal_uS13-like_H2TH"/>
</dbReference>
<dbReference type="InterPro" id="IPR019980">
    <property type="entry name" value="Ribosomal_uS13_bac-type"/>
</dbReference>
<dbReference type="InterPro" id="IPR018269">
    <property type="entry name" value="Ribosomal_uS13_CS"/>
</dbReference>
<dbReference type="NCBIfam" id="TIGR03631">
    <property type="entry name" value="uS13_bact"/>
    <property type="match status" value="1"/>
</dbReference>
<dbReference type="PANTHER" id="PTHR10871">
    <property type="entry name" value="30S RIBOSOMAL PROTEIN S13/40S RIBOSOMAL PROTEIN S18"/>
    <property type="match status" value="1"/>
</dbReference>
<dbReference type="PANTHER" id="PTHR10871:SF1">
    <property type="entry name" value="SMALL RIBOSOMAL SUBUNIT PROTEIN US13M"/>
    <property type="match status" value="1"/>
</dbReference>
<dbReference type="Pfam" id="PF00416">
    <property type="entry name" value="Ribosomal_S13"/>
    <property type="match status" value="1"/>
</dbReference>
<dbReference type="PIRSF" id="PIRSF002134">
    <property type="entry name" value="Ribosomal_S13"/>
    <property type="match status" value="1"/>
</dbReference>
<dbReference type="SUPFAM" id="SSF46946">
    <property type="entry name" value="S13-like H2TH domain"/>
    <property type="match status" value="1"/>
</dbReference>
<dbReference type="PROSITE" id="PS00646">
    <property type="entry name" value="RIBOSOMAL_S13_1"/>
    <property type="match status" value="1"/>
</dbReference>
<dbReference type="PROSITE" id="PS50159">
    <property type="entry name" value="RIBOSOMAL_S13_2"/>
    <property type="match status" value="1"/>
</dbReference>
<accession>Q03EE0</accession>